<organism>
    <name type="scientific">Arabidopsis thaliana</name>
    <name type="common">Mouse-ear cress</name>
    <dbReference type="NCBI Taxonomy" id="3702"/>
    <lineage>
        <taxon>Eukaryota</taxon>
        <taxon>Viridiplantae</taxon>
        <taxon>Streptophyta</taxon>
        <taxon>Embryophyta</taxon>
        <taxon>Tracheophyta</taxon>
        <taxon>Spermatophyta</taxon>
        <taxon>Magnoliopsida</taxon>
        <taxon>eudicotyledons</taxon>
        <taxon>Gunneridae</taxon>
        <taxon>Pentapetalae</taxon>
        <taxon>rosids</taxon>
        <taxon>malvids</taxon>
        <taxon>Brassicales</taxon>
        <taxon>Brassicaceae</taxon>
        <taxon>Camelineae</taxon>
        <taxon>Arabidopsis</taxon>
    </lineage>
</organism>
<sequence>MADTSHLERMGRELKCPICLSLYNSAVSLSCNHVFCNACIVKSMKMDATCPVCKIPYHRREIRGAPHMDSLVSIYKNMEDASGIKLFVSQNNPSPSDKEKQVRDASVEKASDKNRQGSRKGRASKRNEYGKTKEIDVDAPGPIVMKPSSQTKKRVQLLQNLSAESLTKPTESVETAEKPKDYTENTVIRLDEHPSLNKEGNLSPFFWLRDEDDGENSSQRTESDQLLGTTPVNVPSFSDLMDSDHESPSKEDEQQKPNPGDMFDSEMFEWTQRPCSPEILPSPVKAKVLGRDEIDLTQKKLPKVKVASSKCKNRKAGSARNTVARRSIGVSQEDNMESSAAATISEQQDSRGTSGTIIRNDVNTDENVKAKRATRSKAQSTRVQSDLNVSNEADGKQGTKRKRSSIKSSPAHPIAGPNELSLGTEIVGKGDQDQAHGPSDTHPEKRSPTEKPSLKKRGRKSNASSSLKDLSGKTQKKTSEKKLKLDSHMISSKATQPHGNGILTAGLNQGGDKQDSRNNRKSTVGKDDHTMQVIEKCSTINKSSSGGSAHLRRCNGSLTKKFTCAFCQCSEDTEASGEMTHYYRGEPVSADFNGGSKVIHVHKNCAEWAPNVYFNDLTIVNLDVELTRSRRISCSCCGLKGAALGCYNKSCKNSFHVTCAKLIPECRWDNVKFVMLCPLDASIKLPCEEANSKDRKCKRTPKEPLHSQPKQVSGKANIRELHIKQFHGFSKKLVLSCSGLTVEEKTVIAEFAELSGVTISKNWDSTVTHVIASINENGACKRTLKFMMAILEGKWILTIDWIKACMKNTKYVSEEPYEITMDVHGIREGPYLGRQRALKKKPKLFTGLKFYIMGDFELAYKGYLQDLIVAAGGTILRRRPVSSDDNEASTIVVFSVEPSKKKTLTQRRSDAEALAKSARARAASSSWVLDSIAGCQILVLI</sequence>
<gene>
    <name evidence="8" type="primary">BRCA1</name>
    <name evidence="10" type="ordered locus">At4g21070</name>
    <name evidence="11" type="ORF">T13K14.230</name>
</gene>
<evidence type="ECO:0000255" key="1">
    <source>
        <dbReference type="PROSITE-ProRule" id="PRU00033"/>
    </source>
</evidence>
<evidence type="ECO:0000255" key="2">
    <source>
        <dbReference type="PROSITE-ProRule" id="PRU00175"/>
    </source>
</evidence>
<evidence type="ECO:0000255" key="3">
    <source>
        <dbReference type="PROSITE-ProRule" id="PRU00768"/>
    </source>
</evidence>
<evidence type="ECO:0000255" key="4">
    <source>
        <dbReference type="PROSITE-ProRule" id="PRU01146"/>
    </source>
</evidence>
<evidence type="ECO:0000256" key="5">
    <source>
        <dbReference type="SAM" id="MobiDB-lite"/>
    </source>
</evidence>
<evidence type="ECO:0000269" key="6">
    <source>
    </source>
</evidence>
<evidence type="ECO:0000269" key="7">
    <source>
    </source>
</evidence>
<evidence type="ECO:0000303" key="8">
    <source>
    </source>
</evidence>
<evidence type="ECO:0000305" key="9"/>
<evidence type="ECO:0000312" key="10">
    <source>
        <dbReference type="Araport" id="AT4G21070"/>
    </source>
</evidence>
<evidence type="ECO:0000312" key="11">
    <source>
        <dbReference type="EMBL" id="CAB45902.1"/>
    </source>
</evidence>
<reference key="1">
    <citation type="journal article" date="2003" name="Nucleic Acids Res.">
        <title>Characterization of Arabidopsis thaliana ortholog of the human breast cancer susceptibility gene 1: AtBRCA1, strongly induced by gamma rays.</title>
        <authorList>
            <person name="Lafarge S."/>
            <person name="Montane M.-H."/>
        </authorList>
    </citation>
    <scope>NUCLEOTIDE SEQUENCE [MRNA]</scope>
    <scope>INDUCTION BY GAMMA RAYS</scope>
    <scope>TISSUE SPECIFICITY</scope>
    <source>
        <strain>cv. Columbia</strain>
    </source>
</reference>
<reference key="2">
    <citation type="journal article" date="1999" name="Nature">
        <title>Sequence and analysis of chromosome 4 of the plant Arabidopsis thaliana.</title>
        <authorList>
            <person name="Mayer K.F.X."/>
            <person name="Schueller C."/>
            <person name="Wambutt R."/>
            <person name="Murphy G."/>
            <person name="Volckaert G."/>
            <person name="Pohl T."/>
            <person name="Duesterhoeft A."/>
            <person name="Stiekema W."/>
            <person name="Entian K.-D."/>
            <person name="Terryn N."/>
            <person name="Harris B."/>
            <person name="Ansorge W."/>
            <person name="Brandt P."/>
            <person name="Grivell L.A."/>
            <person name="Rieger M."/>
            <person name="Weichselgartner M."/>
            <person name="de Simone V."/>
            <person name="Obermaier B."/>
            <person name="Mache R."/>
            <person name="Mueller M."/>
            <person name="Kreis M."/>
            <person name="Delseny M."/>
            <person name="Puigdomenech P."/>
            <person name="Watson M."/>
            <person name="Schmidtheini T."/>
            <person name="Reichert B."/>
            <person name="Portetelle D."/>
            <person name="Perez-Alonso M."/>
            <person name="Boutry M."/>
            <person name="Bancroft I."/>
            <person name="Vos P."/>
            <person name="Hoheisel J."/>
            <person name="Zimmermann W."/>
            <person name="Wedler H."/>
            <person name="Ridley P."/>
            <person name="Langham S.-A."/>
            <person name="McCullagh B."/>
            <person name="Bilham L."/>
            <person name="Robben J."/>
            <person name="van der Schueren J."/>
            <person name="Grymonprez B."/>
            <person name="Chuang Y.-J."/>
            <person name="Vandenbussche F."/>
            <person name="Braeken M."/>
            <person name="Weltjens I."/>
            <person name="Voet M."/>
            <person name="Bastiaens I."/>
            <person name="Aert R."/>
            <person name="Defoor E."/>
            <person name="Weitzenegger T."/>
            <person name="Bothe G."/>
            <person name="Ramsperger U."/>
            <person name="Hilbert H."/>
            <person name="Braun M."/>
            <person name="Holzer E."/>
            <person name="Brandt A."/>
            <person name="Peters S."/>
            <person name="van Staveren M."/>
            <person name="Dirkse W."/>
            <person name="Mooijman P."/>
            <person name="Klein Lankhorst R."/>
            <person name="Rose M."/>
            <person name="Hauf J."/>
            <person name="Koetter P."/>
            <person name="Berneiser S."/>
            <person name="Hempel S."/>
            <person name="Feldpausch M."/>
            <person name="Lamberth S."/>
            <person name="Van den Daele H."/>
            <person name="De Keyser A."/>
            <person name="Buysshaert C."/>
            <person name="Gielen J."/>
            <person name="Villarroel R."/>
            <person name="De Clercq R."/>
            <person name="van Montagu M."/>
            <person name="Rogers J."/>
            <person name="Cronin A."/>
            <person name="Quail M.A."/>
            <person name="Bray-Allen S."/>
            <person name="Clark L."/>
            <person name="Doggett J."/>
            <person name="Hall S."/>
            <person name="Kay M."/>
            <person name="Lennard N."/>
            <person name="McLay K."/>
            <person name="Mayes R."/>
            <person name="Pettett A."/>
            <person name="Rajandream M.A."/>
            <person name="Lyne M."/>
            <person name="Benes V."/>
            <person name="Rechmann S."/>
            <person name="Borkova D."/>
            <person name="Bloecker H."/>
            <person name="Scharfe M."/>
            <person name="Grimm M."/>
            <person name="Loehnert T.-H."/>
            <person name="Dose S."/>
            <person name="de Haan M."/>
            <person name="Maarse A.C."/>
            <person name="Schaefer M."/>
            <person name="Mueller-Auer S."/>
            <person name="Gabel C."/>
            <person name="Fuchs M."/>
            <person name="Fartmann B."/>
            <person name="Granderath K."/>
            <person name="Dauner D."/>
            <person name="Herzl A."/>
            <person name="Neumann S."/>
            <person name="Argiriou A."/>
            <person name="Vitale D."/>
            <person name="Liguori R."/>
            <person name="Piravandi E."/>
            <person name="Massenet O."/>
            <person name="Quigley F."/>
            <person name="Clabauld G."/>
            <person name="Muendlein A."/>
            <person name="Felber R."/>
            <person name="Schnabl S."/>
            <person name="Hiller R."/>
            <person name="Schmidt W."/>
            <person name="Lecharny A."/>
            <person name="Aubourg S."/>
            <person name="Chefdor F."/>
            <person name="Cooke R."/>
            <person name="Berger C."/>
            <person name="Monfort A."/>
            <person name="Casacuberta E."/>
            <person name="Gibbons T."/>
            <person name="Weber N."/>
            <person name="Vandenbol M."/>
            <person name="Bargues M."/>
            <person name="Terol J."/>
            <person name="Torres A."/>
            <person name="Perez-Perez A."/>
            <person name="Purnelle B."/>
            <person name="Bent E."/>
            <person name="Johnson S."/>
            <person name="Tacon D."/>
            <person name="Jesse T."/>
            <person name="Heijnen L."/>
            <person name="Schwarz S."/>
            <person name="Scholler P."/>
            <person name="Heber S."/>
            <person name="Francs P."/>
            <person name="Bielke C."/>
            <person name="Frishman D."/>
            <person name="Haase D."/>
            <person name="Lemcke K."/>
            <person name="Mewes H.-W."/>
            <person name="Stocker S."/>
            <person name="Zaccaria P."/>
            <person name="Bevan M."/>
            <person name="Wilson R.K."/>
            <person name="de la Bastide M."/>
            <person name="Habermann K."/>
            <person name="Parnell L."/>
            <person name="Dedhia N."/>
            <person name="Gnoj L."/>
            <person name="Schutz K."/>
            <person name="Huang E."/>
            <person name="Spiegel L."/>
            <person name="Sekhon M."/>
            <person name="Murray J."/>
            <person name="Sheet P."/>
            <person name="Cordes M."/>
            <person name="Abu-Threideh J."/>
            <person name="Stoneking T."/>
            <person name="Kalicki J."/>
            <person name="Graves T."/>
            <person name="Harmon G."/>
            <person name="Edwards J."/>
            <person name="Latreille P."/>
            <person name="Courtney L."/>
            <person name="Cloud J."/>
            <person name="Abbott A."/>
            <person name="Scott K."/>
            <person name="Johnson D."/>
            <person name="Minx P."/>
            <person name="Bentley D."/>
            <person name="Fulton B."/>
            <person name="Miller N."/>
            <person name="Greco T."/>
            <person name="Kemp K."/>
            <person name="Kramer J."/>
            <person name="Fulton L."/>
            <person name="Mardis E."/>
            <person name="Dante M."/>
            <person name="Pepin K."/>
            <person name="Hillier L.W."/>
            <person name="Nelson J."/>
            <person name="Spieth J."/>
            <person name="Ryan E."/>
            <person name="Andrews S."/>
            <person name="Geisel C."/>
            <person name="Layman D."/>
            <person name="Du H."/>
            <person name="Ali J."/>
            <person name="Berghoff A."/>
            <person name="Jones K."/>
            <person name="Drone K."/>
            <person name="Cotton M."/>
            <person name="Joshu C."/>
            <person name="Antonoiu B."/>
            <person name="Zidanic M."/>
            <person name="Strong C."/>
            <person name="Sun H."/>
            <person name="Lamar B."/>
            <person name="Yordan C."/>
            <person name="Ma P."/>
            <person name="Zhong J."/>
            <person name="Preston R."/>
            <person name="Vil D."/>
            <person name="Shekher M."/>
            <person name="Matero A."/>
            <person name="Shah R."/>
            <person name="Swaby I.K."/>
            <person name="O'Shaughnessy A."/>
            <person name="Rodriguez M."/>
            <person name="Hoffman J."/>
            <person name="Till S."/>
            <person name="Granat S."/>
            <person name="Shohdy N."/>
            <person name="Hasegawa A."/>
            <person name="Hameed A."/>
            <person name="Lodhi M."/>
            <person name="Johnson A."/>
            <person name="Chen E."/>
            <person name="Marra M.A."/>
            <person name="Martienssen R."/>
            <person name="McCombie W.R."/>
        </authorList>
    </citation>
    <scope>NUCLEOTIDE SEQUENCE [LARGE SCALE GENOMIC DNA]</scope>
    <source>
        <strain>cv. Columbia</strain>
    </source>
</reference>
<reference key="3">
    <citation type="journal article" date="2017" name="Plant J.">
        <title>Araport11: a complete reannotation of the Arabidopsis thaliana reference genome.</title>
        <authorList>
            <person name="Cheng C.Y."/>
            <person name="Krishnakumar V."/>
            <person name="Chan A.P."/>
            <person name="Thibaud-Nissen F."/>
            <person name="Schobel S."/>
            <person name="Town C.D."/>
        </authorList>
    </citation>
    <scope>GENOME REANNOTATION</scope>
    <source>
        <strain>cv. Columbia</strain>
    </source>
</reference>
<reference key="4">
    <citation type="journal article" date="2003" name="Science">
        <title>Empirical analysis of transcriptional activity in the Arabidopsis genome.</title>
        <authorList>
            <person name="Yamada K."/>
            <person name="Lim J."/>
            <person name="Dale J.M."/>
            <person name="Chen H."/>
            <person name="Shinn P."/>
            <person name="Palm C.J."/>
            <person name="Southwick A.M."/>
            <person name="Wu H.C."/>
            <person name="Kim C.J."/>
            <person name="Nguyen M."/>
            <person name="Pham P.K."/>
            <person name="Cheuk R.F."/>
            <person name="Karlin-Newmann G."/>
            <person name="Liu S.X."/>
            <person name="Lam B."/>
            <person name="Sakano H."/>
            <person name="Wu T."/>
            <person name="Yu G."/>
            <person name="Miranda M."/>
            <person name="Quach H.L."/>
            <person name="Tripp M."/>
            <person name="Chang C.H."/>
            <person name="Lee J.M."/>
            <person name="Toriumi M.J."/>
            <person name="Chan M.M."/>
            <person name="Tang C.C."/>
            <person name="Onodera C.S."/>
            <person name="Deng J.M."/>
            <person name="Akiyama K."/>
            <person name="Ansari Y."/>
            <person name="Arakawa T."/>
            <person name="Banh J."/>
            <person name="Banno F."/>
            <person name="Bowser L."/>
            <person name="Brooks S.Y."/>
            <person name="Carninci P."/>
            <person name="Chao Q."/>
            <person name="Choy N."/>
            <person name="Enju A."/>
            <person name="Goldsmith A.D."/>
            <person name="Gurjal M."/>
            <person name="Hansen N.F."/>
            <person name="Hayashizaki Y."/>
            <person name="Johnson-Hopson C."/>
            <person name="Hsuan V.W."/>
            <person name="Iida K."/>
            <person name="Karnes M."/>
            <person name="Khan S."/>
            <person name="Koesema E."/>
            <person name="Ishida J."/>
            <person name="Jiang P.X."/>
            <person name="Jones T."/>
            <person name="Kawai J."/>
            <person name="Kamiya A."/>
            <person name="Meyers C."/>
            <person name="Nakajima M."/>
            <person name="Narusaka M."/>
            <person name="Seki M."/>
            <person name="Sakurai T."/>
            <person name="Satou M."/>
            <person name="Tamse R."/>
            <person name="Vaysberg M."/>
            <person name="Wallender E.K."/>
            <person name="Wong C."/>
            <person name="Yamamura Y."/>
            <person name="Yuan S."/>
            <person name="Shinozaki K."/>
            <person name="Davis R.W."/>
            <person name="Theologis A."/>
            <person name="Ecker J.R."/>
        </authorList>
    </citation>
    <scope>NUCLEOTIDE SEQUENCE [LARGE SCALE MRNA]</scope>
    <source>
        <strain>cv. Columbia</strain>
    </source>
</reference>
<reference key="5">
    <citation type="journal article" date="2006" name="EMBO J.">
        <title>A homologue of the breast cancer-associated gene BARD1 is involved in DNA repair in plants.</title>
        <authorList>
            <person name="Reidt W."/>
            <person name="Wurz R."/>
            <person name="Wanieck K."/>
            <person name="Chu H.H."/>
            <person name="Puchta H."/>
        </authorList>
    </citation>
    <scope>FUNCTION</scope>
    <scope>DISRUPTION PHENOTYPE</scope>
    <scope>INTERACTION WITH BARD1/ROW1</scope>
    <scope>INDUCTION BY GAMMA RAYS</scope>
    <scope>TISSUE SPECIFICITY</scope>
    <scope>SUBCELLULAR LOCATION</scope>
</reference>
<reference key="6">
    <citation type="journal article" date="2011" name="Front. Plant Sci.">
        <title>Homologs of breast cancer genes in plants.</title>
        <authorList>
            <person name="Trapp O."/>
            <person name="Seeliger K."/>
            <person name="Puchta H."/>
        </authorList>
    </citation>
    <scope>REVIEW</scope>
    <scope>GENE FAMILY</scope>
</reference>
<proteinExistence type="evidence at protein level"/>
<feature type="chain" id="PRO_0000363413" description="Protein BREAST CANCER SUSCEPTIBILITY 1 homolog">
    <location>
        <begin position="1"/>
        <end position="941"/>
    </location>
</feature>
<feature type="domain" description="BRCT 1" evidence="1">
    <location>
        <begin position="724"/>
        <end position="819"/>
    </location>
</feature>
<feature type="domain" description="BRCT 2" evidence="1">
    <location>
        <begin position="840"/>
        <end position="941"/>
    </location>
</feature>
<feature type="zinc finger region" description="RING-type" evidence="2">
    <location>
        <begin position="16"/>
        <end position="54"/>
    </location>
</feature>
<feature type="zinc finger region" description="C2HC pre-PHD-type" evidence="4">
    <location>
        <begin position="561"/>
        <end position="612"/>
    </location>
</feature>
<feature type="zinc finger region" description="PHD-type; degenerate" evidence="4">
    <location>
        <begin position="632"/>
        <end position="681"/>
    </location>
</feature>
<feature type="region of interest" description="Disordered" evidence="5">
    <location>
        <begin position="87"/>
        <end position="282"/>
    </location>
</feature>
<feature type="region of interest" description="Disordered" evidence="5">
    <location>
        <begin position="303"/>
        <end position="528"/>
    </location>
</feature>
<feature type="short sequence motif" description="Nuclear localization signal 1" evidence="3">
    <location>
        <begin position="298"/>
        <end position="305"/>
    </location>
</feature>
<feature type="short sequence motif" description="Nuclear localization signal 2" evidence="3">
    <location>
        <begin position="444"/>
        <end position="451"/>
    </location>
</feature>
<feature type="compositionally biased region" description="Basic and acidic residues" evidence="5">
    <location>
        <begin position="96"/>
        <end position="115"/>
    </location>
</feature>
<feature type="compositionally biased region" description="Basic and acidic residues" evidence="5">
    <location>
        <begin position="125"/>
        <end position="136"/>
    </location>
</feature>
<feature type="compositionally biased region" description="Polar residues" evidence="5">
    <location>
        <begin position="157"/>
        <end position="173"/>
    </location>
</feature>
<feature type="compositionally biased region" description="Basic and acidic residues" evidence="5">
    <location>
        <begin position="175"/>
        <end position="196"/>
    </location>
</feature>
<feature type="compositionally biased region" description="Polar residues" evidence="5">
    <location>
        <begin position="216"/>
        <end position="236"/>
    </location>
</feature>
<feature type="compositionally biased region" description="Basic and acidic residues" evidence="5">
    <location>
        <begin position="242"/>
        <end position="255"/>
    </location>
</feature>
<feature type="compositionally biased region" description="Polar residues" evidence="5">
    <location>
        <begin position="329"/>
        <end position="357"/>
    </location>
</feature>
<feature type="compositionally biased region" description="Polar residues" evidence="5">
    <location>
        <begin position="376"/>
        <end position="391"/>
    </location>
</feature>
<feature type="compositionally biased region" description="Basic and acidic residues" evidence="5">
    <location>
        <begin position="428"/>
        <end position="453"/>
    </location>
</feature>
<feature type="compositionally biased region" description="Basic and acidic residues" evidence="5">
    <location>
        <begin position="477"/>
        <end position="487"/>
    </location>
</feature>
<feature type="compositionally biased region" description="Polar residues" evidence="5">
    <location>
        <begin position="489"/>
        <end position="498"/>
    </location>
</feature>
<feature type="compositionally biased region" description="Basic and acidic residues" evidence="5">
    <location>
        <begin position="512"/>
        <end position="528"/>
    </location>
</feature>
<keyword id="KW-0227">DNA damage</keyword>
<keyword id="KW-0234">DNA repair</keyword>
<keyword id="KW-0479">Metal-binding</keyword>
<keyword id="KW-0539">Nucleus</keyword>
<keyword id="KW-1185">Reference proteome</keyword>
<keyword id="KW-0677">Repeat</keyword>
<keyword id="KW-0862">Zinc</keyword>
<keyword id="KW-0863">Zinc-finger</keyword>
<dbReference type="EMBL" id="AY081328">
    <property type="protein sequence ID" value="AAL91217.1"/>
    <property type="molecule type" value="mRNA"/>
</dbReference>
<dbReference type="EMBL" id="AL080282">
    <property type="protein sequence ID" value="CAB45902.1"/>
    <property type="status" value="ALT_SEQ"/>
    <property type="molecule type" value="Genomic_DNA"/>
</dbReference>
<dbReference type="EMBL" id="AL161554">
    <property type="protein sequence ID" value="CAB79107.1"/>
    <property type="status" value="ALT_SEQ"/>
    <property type="molecule type" value="Genomic_DNA"/>
</dbReference>
<dbReference type="EMBL" id="CP002687">
    <property type="protein sequence ID" value="AEE84396.1"/>
    <property type="molecule type" value="Genomic_DNA"/>
</dbReference>
<dbReference type="EMBL" id="AF515728">
    <property type="protein sequence ID" value="AAO39850.1"/>
    <property type="molecule type" value="mRNA"/>
</dbReference>
<dbReference type="EMBL" id="BT010547">
    <property type="protein sequence ID" value="AAQ65170.1"/>
    <property type="molecule type" value="mRNA"/>
</dbReference>
<dbReference type="RefSeq" id="NP_193839.4">
    <property type="nucleotide sequence ID" value="NM_118225.5"/>
</dbReference>
<dbReference type="SMR" id="Q8RXD4"/>
<dbReference type="BioGRID" id="13145">
    <property type="interactions" value="1"/>
</dbReference>
<dbReference type="FunCoup" id="Q8RXD4">
    <property type="interactions" value="428"/>
</dbReference>
<dbReference type="STRING" id="3702.Q8RXD4"/>
<dbReference type="iPTMnet" id="Q8RXD4"/>
<dbReference type="PaxDb" id="3702-AT4G21070.1"/>
<dbReference type="ProteomicsDB" id="240501"/>
<dbReference type="EnsemblPlants" id="AT4G21070.1">
    <property type="protein sequence ID" value="AT4G21070.1"/>
    <property type="gene ID" value="AT4G21070"/>
</dbReference>
<dbReference type="GeneID" id="827854"/>
<dbReference type="Gramene" id="AT4G21070.1">
    <property type="protein sequence ID" value="AT4G21070.1"/>
    <property type="gene ID" value="AT4G21070"/>
</dbReference>
<dbReference type="KEGG" id="ath:AT4G21070"/>
<dbReference type="Araport" id="AT4G21070"/>
<dbReference type="TAIR" id="AT4G21070">
    <property type="gene designation" value="BRCA1"/>
</dbReference>
<dbReference type="eggNOG" id="KOG4362">
    <property type="taxonomic scope" value="Eukaryota"/>
</dbReference>
<dbReference type="HOGENOM" id="CLU_004218_0_0_1"/>
<dbReference type="InParanoid" id="Q8RXD4"/>
<dbReference type="OMA" id="RRIKCAC"/>
<dbReference type="PhylomeDB" id="Q8RXD4"/>
<dbReference type="PRO" id="PR:Q8RXD4"/>
<dbReference type="Proteomes" id="UP000006548">
    <property type="component" value="Chromosome 4"/>
</dbReference>
<dbReference type="ExpressionAtlas" id="Q8RXD4">
    <property type="expression patterns" value="baseline and differential"/>
</dbReference>
<dbReference type="GO" id="GO:0005634">
    <property type="term" value="C:nucleus"/>
    <property type="evidence" value="ECO:0000314"/>
    <property type="project" value="UniProtKB"/>
</dbReference>
<dbReference type="GO" id="GO:0004842">
    <property type="term" value="F:ubiquitin-protein transferase activity"/>
    <property type="evidence" value="ECO:0000314"/>
    <property type="project" value="TAIR"/>
</dbReference>
<dbReference type="GO" id="GO:0008270">
    <property type="term" value="F:zinc ion binding"/>
    <property type="evidence" value="ECO:0007669"/>
    <property type="project" value="UniProtKB-KW"/>
</dbReference>
<dbReference type="GO" id="GO:0071480">
    <property type="term" value="P:cellular response to gamma radiation"/>
    <property type="evidence" value="ECO:0000270"/>
    <property type="project" value="UniProtKB"/>
</dbReference>
<dbReference type="GO" id="GO:0006310">
    <property type="term" value="P:DNA recombination"/>
    <property type="evidence" value="ECO:0000315"/>
    <property type="project" value="TAIR"/>
</dbReference>
<dbReference type="GO" id="GO:0006281">
    <property type="term" value="P:DNA repair"/>
    <property type="evidence" value="ECO:0000315"/>
    <property type="project" value="TAIR"/>
</dbReference>
<dbReference type="GO" id="GO:0000724">
    <property type="term" value="P:double-strand break repair via homologous recombination"/>
    <property type="evidence" value="ECO:0000315"/>
    <property type="project" value="UniProtKB"/>
</dbReference>
<dbReference type="GO" id="GO:0010332">
    <property type="term" value="P:response to gamma radiation"/>
    <property type="evidence" value="ECO:0000270"/>
    <property type="project" value="TAIR"/>
</dbReference>
<dbReference type="CDD" id="cd17734">
    <property type="entry name" value="BRCT_Bard1_rpt1"/>
    <property type="match status" value="1"/>
</dbReference>
<dbReference type="CDD" id="cd15571">
    <property type="entry name" value="ePHD"/>
    <property type="match status" value="1"/>
</dbReference>
<dbReference type="CDD" id="cd23147">
    <property type="entry name" value="RING-HC_AtBRCA1-like"/>
    <property type="match status" value="1"/>
</dbReference>
<dbReference type="FunFam" id="3.30.40.10:FF:000310">
    <property type="entry name" value="Breast cancer associated RING 1"/>
    <property type="match status" value="1"/>
</dbReference>
<dbReference type="FunFam" id="3.30.40.10:FF:000352">
    <property type="entry name" value="Breast cancer associated RING 1"/>
    <property type="match status" value="1"/>
</dbReference>
<dbReference type="FunFam" id="3.40.50.10190:FF:000006">
    <property type="entry name" value="Breast cancer type 1 susceptibility protein homolog"/>
    <property type="match status" value="1"/>
</dbReference>
<dbReference type="Gene3D" id="3.40.50.10190">
    <property type="entry name" value="BRCT domain"/>
    <property type="match status" value="2"/>
</dbReference>
<dbReference type="Gene3D" id="3.30.40.10">
    <property type="entry name" value="Zinc/RING finger domain, C3HC4 (zinc finger)"/>
    <property type="match status" value="2"/>
</dbReference>
<dbReference type="InterPro" id="IPR031099">
    <property type="entry name" value="BRCA1-associated"/>
</dbReference>
<dbReference type="InterPro" id="IPR001357">
    <property type="entry name" value="BRCT_dom"/>
</dbReference>
<dbReference type="InterPro" id="IPR036420">
    <property type="entry name" value="BRCT_dom_sf"/>
</dbReference>
<dbReference type="InterPro" id="IPR034732">
    <property type="entry name" value="EPHD"/>
</dbReference>
<dbReference type="InterPro" id="IPR001841">
    <property type="entry name" value="Znf_RING"/>
</dbReference>
<dbReference type="InterPro" id="IPR013083">
    <property type="entry name" value="Znf_RING/FYVE/PHD"/>
</dbReference>
<dbReference type="InterPro" id="IPR017907">
    <property type="entry name" value="Znf_RING_CS"/>
</dbReference>
<dbReference type="PANTHER" id="PTHR13763:SF0">
    <property type="entry name" value="BREAST CANCER TYPE 1 SUSCEPTIBILITY PROTEIN"/>
    <property type="match status" value="1"/>
</dbReference>
<dbReference type="PANTHER" id="PTHR13763">
    <property type="entry name" value="BREAST CANCER TYPE 1 SUSCEPTIBILITY PROTEIN BRCA1"/>
    <property type="match status" value="1"/>
</dbReference>
<dbReference type="Pfam" id="PF00533">
    <property type="entry name" value="BRCT"/>
    <property type="match status" value="1"/>
</dbReference>
<dbReference type="Pfam" id="PF16589">
    <property type="entry name" value="BRCT_2"/>
    <property type="match status" value="1"/>
</dbReference>
<dbReference type="Pfam" id="PF13923">
    <property type="entry name" value="zf-C3HC4_2"/>
    <property type="match status" value="1"/>
</dbReference>
<dbReference type="Pfam" id="PF13771">
    <property type="entry name" value="zf-HC5HC2H"/>
    <property type="match status" value="1"/>
</dbReference>
<dbReference type="PIRSF" id="PIRSF001734">
    <property type="entry name" value="BRCA1"/>
    <property type="match status" value="1"/>
</dbReference>
<dbReference type="SMART" id="SM00292">
    <property type="entry name" value="BRCT"/>
    <property type="match status" value="2"/>
</dbReference>
<dbReference type="SMART" id="SM00184">
    <property type="entry name" value="RING"/>
    <property type="match status" value="1"/>
</dbReference>
<dbReference type="SUPFAM" id="SSF52113">
    <property type="entry name" value="BRCT domain"/>
    <property type="match status" value="2"/>
</dbReference>
<dbReference type="SUPFAM" id="SSF57850">
    <property type="entry name" value="RING/U-box"/>
    <property type="match status" value="1"/>
</dbReference>
<dbReference type="PROSITE" id="PS50172">
    <property type="entry name" value="BRCT"/>
    <property type="match status" value="2"/>
</dbReference>
<dbReference type="PROSITE" id="PS51805">
    <property type="entry name" value="EPHD"/>
    <property type="match status" value="1"/>
</dbReference>
<dbReference type="PROSITE" id="PS00518">
    <property type="entry name" value="ZF_RING_1"/>
    <property type="match status" value="1"/>
</dbReference>
<dbReference type="PROSITE" id="PS50089">
    <property type="entry name" value="ZF_RING_2"/>
    <property type="match status" value="1"/>
</dbReference>
<accession>Q8RXD4</accession>
<accession>Q9SUA7</accession>
<name>BRCA1_ARATH</name>
<protein>
    <recommendedName>
        <fullName evidence="8">Protein BREAST CANCER SUSCEPTIBILITY 1 homolog</fullName>
        <shortName evidence="8">AtBRCA1</shortName>
    </recommendedName>
</protein>
<comment type="function">
    <text evidence="7">Plays a role in DNA repair and in cell-cycle control. Required for the repair of DNA double-strand breaks (DSBs), both natural and induced by genotoxic stress, by homologous recombination (HR).</text>
</comment>
<comment type="subunit">
    <text evidence="7">Forms heterodimer with BARD1/ROW1.</text>
</comment>
<comment type="subcellular location">
    <subcellularLocation>
        <location evidence="3 7">Nucleus</location>
    </subcellularLocation>
</comment>
<comment type="tissue specificity">
    <text evidence="6 7">Expressed ubiquitously with highest levels in flower buds (PubMed:12582233). Mostly expressed in flowers and siliques, and, to a lower extent, in roots, rosette leaves, inflorescence and young cauline leaves (PubMed:16957774).</text>
</comment>
<comment type="induction">
    <text evidence="6 7">By gamma rays treatment.</text>
</comment>
<comment type="disruption phenotype">
    <text evidence="7">Enhanced sensitivity to mitomycin C.</text>
</comment>
<comment type="sequence caution" evidence="9">
    <conflict type="erroneous gene model prediction">
        <sequence resource="EMBL-CDS" id="CAB45902"/>
    </conflict>
    <text>The predicted gene has been split into 2 genes: At4g21065 and At4g21070.</text>
</comment>
<comment type="sequence caution" evidence="9">
    <conflict type="erroneous gene model prediction">
        <sequence resource="EMBL-CDS" id="CAB79107"/>
    </conflict>
    <text>The predicted gene has been split into 2 genes: At4g21065 and At4g21070.</text>
</comment>